<sequence>MPRYALRIEYDGGPFAGWQRQAAQASVQGAIETALGRLEPGPHTIAAAGRTDTGVHATGQVAHCDLVREWDPFRLAGALNAHLKPLPVAIVAAARVPEEFHARFSAVERRYLFRLLARRAPEVHDRGRVWRVPHPLDPEAMRAGAAHLVGRHDFTTFRAAGCQAASPVKTLDALTLETVEGMNGTEYRFHLRARSFLHNQVRSIVGTLERVGAGAWTPDQVREALEAHDRAACGPVCPPQGLYLTGVGYPADPFA</sequence>
<reference key="1">
    <citation type="submission" date="2007-02" db="EMBL/GenBank/DDBJ databases">
        <title>Complete sequence of chromosome 1 of Rhodobacter sphaeroides ATCC 17029.</title>
        <authorList>
            <person name="Copeland A."/>
            <person name="Lucas S."/>
            <person name="Lapidus A."/>
            <person name="Barry K."/>
            <person name="Detter J.C."/>
            <person name="Glavina del Rio T."/>
            <person name="Hammon N."/>
            <person name="Israni S."/>
            <person name="Dalin E."/>
            <person name="Tice H."/>
            <person name="Pitluck S."/>
            <person name="Kiss H."/>
            <person name="Brettin T."/>
            <person name="Bruce D."/>
            <person name="Han C."/>
            <person name="Tapia R."/>
            <person name="Gilna P."/>
            <person name="Schmutz J."/>
            <person name="Larimer F."/>
            <person name="Land M."/>
            <person name="Hauser L."/>
            <person name="Kyrpides N."/>
            <person name="Mikhailova N."/>
            <person name="Richardson P."/>
            <person name="Mackenzie C."/>
            <person name="Choudhary M."/>
            <person name="Donohue T.J."/>
            <person name="Kaplan S."/>
        </authorList>
    </citation>
    <scope>NUCLEOTIDE SEQUENCE [LARGE SCALE GENOMIC DNA]</scope>
    <source>
        <strain>ATCC 17029 / ATH 2.4.9</strain>
    </source>
</reference>
<accession>A3PLW1</accession>
<evidence type="ECO:0000255" key="1">
    <source>
        <dbReference type="HAMAP-Rule" id="MF_00171"/>
    </source>
</evidence>
<keyword id="KW-0413">Isomerase</keyword>
<keyword id="KW-0819">tRNA processing</keyword>
<comment type="function">
    <text evidence="1">Formation of pseudouridine at positions 38, 39 and 40 in the anticodon stem and loop of transfer RNAs.</text>
</comment>
<comment type="catalytic activity">
    <reaction evidence="1">
        <text>uridine(38/39/40) in tRNA = pseudouridine(38/39/40) in tRNA</text>
        <dbReference type="Rhea" id="RHEA:22376"/>
        <dbReference type="Rhea" id="RHEA-COMP:10085"/>
        <dbReference type="Rhea" id="RHEA-COMP:10087"/>
        <dbReference type="ChEBI" id="CHEBI:65314"/>
        <dbReference type="ChEBI" id="CHEBI:65315"/>
        <dbReference type="EC" id="5.4.99.12"/>
    </reaction>
</comment>
<comment type="subunit">
    <text evidence="1">Homodimer.</text>
</comment>
<comment type="similarity">
    <text evidence="1">Belongs to the tRNA pseudouridine synthase TruA family.</text>
</comment>
<feature type="chain" id="PRO_1000017153" description="tRNA pseudouridine synthase A">
    <location>
        <begin position="1"/>
        <end position="255"/>
    </location>
</feature>
<feature type="active site" description="Nucleophile" evidence="1">
    <location>
        <position position="52"/>
    </location>
</feature>
<feature type="binding site" evidence="1">
    <location>
        <position position="111"/>
    </location>
    <ligand>
        <name>substrate</name>
    </ligand>
</feature>
<protein>
    <recommendedName>
        <fullName evidence="1">tRNA pseudouridine synthase A</fullName>
        <ecNumber evidence="1">5.4.99.12</ecNumber>
    </recommendedName>
    <alternativeName>
        <fullName evidence="1">tRNA pseudouridine(38-40) synthase</fullName>
    </alternativeName>
    <alternativeName>
        <fullName evidence="1">tRNA pseudouridylate synthase I</fullName>
    </alternativeName>
    <alternativeName>
        <fullName evidence="1">tRNA-uridine isomerase I</fullName>
    </alternativeName>
</protein>
<organism>
    <name type="scientific">Cereibacter sphaeroides (strain ATCC 17029 / ATH 2.4.9)</name>
    <name type="common">Rhodobacter sphaeroides</name>
    <dbReference type="NCBI Taxonomy" id="349101"/>
    <lineage>
        <taxon>Bacteria</taxon>
        <taxon>Pseudomonadati</taxon>
        <taxon>Pseudomonadota</taxon>
        <taxon>Alphaproteobacteria</taxon>
        <taxon>Rhodobacterales</taxon>
        <taxon>Paracoccaceae</taxon>
        <taxon>Cereibacter</taxon>
    </lineage>
</organism>
<dbReference type="EC" id="5.4.99.12" evidence="1"/>
<dbReference type="EMBL" id="CP000577">
    <property type="protein sequence ID" value="ABN77327.1"/>
    <property type="molecule type" value="Genomic_DNA"/>
</dbReference>
<dbReference type="RefSeq" id="WP_011841523.1">
    <property type="nucleotide sequence ID" value="NC_009049.1"/>
</dbReference>
<dbReference type="SMR" id="A3PLW1"/>
<dbReference type="KEGG" id="rsh:Rsph17029_2224"/>
<dbReference type="HOGENOM" id="CLU_014673_0_2_5"/>
<dbReference type="GO" id="GO:0003723">
    <property type="term" value="F:RNA binding"/>
    <property type="evidence" value="ECO:0007669"/>
    <property type="project" value="InterPro"/>
</dbReference>
<dbReference type="GO" id="GO:0160147">
    <property type="term" value="F:tRNA pseudouridine(38-40) synthase activity"/>
    <property type="evidence" value="ECO:0007669"/>
    <property type="project" value="UniProtKB-EC"/>
</dbReference>
<dbReference type="GO" id="GO:0031119">
    <property type="term" value="P:tRNA pseudouridine synthesis"/>
    <property type="evidence" value="ECO:0007669"/>
    <property type="project" value="UniProtKB-UniRule"/>
</dbReference>
<dbReference type="CDD" id="cd02570">
    <property type="entry name" value="PseudoU_synth_EcTruA"/>
    <property type="match status" value="1"/>
</dbReference>
<dbReference type="FunFam" id="3.30.70.580:FF:000001">
    <property type="entry name" value="tRNA pseudouridine synthase A"/>
    <property type="match status" value="1"/>
</dbReference>
<dbReference type="Gene3D" id="3.30.70.660">
    <property type="entry name" value="Pseudouridine synthase I, catalytic domain, C-terminal subdomain"/>
    <property type="match status" value="1"/>
</dbReference>
<dbReference type="Gene3D" id="3.30.70.580">
    <property type="entry name" value="Pseudouridine synthase I, catalytic domain, N-terminal subdomain"/>
    <property type="match status" value="1"/>
</dbReference>
<dbReference type="HAMAP" id="MF_00171">
    <property type="entry name" value="TruA"/>
    <property type="match status" value="1"/>
</dbReference>
<dbReference type="InterPro" id="IPR020103">
    <property type="entry name" value="PsdUridine_synth_cat_dom_sf"/>
</dbReference>
<dbReference type="InterPro" id="IPR001406">
    <property type="entry name" value="PsdUridine_synth_TruA"/>
</dbReference>
<dbReference type="InterPro" id="IPR020097">
    <property type="entry name" value="PsdUridine_synth_TruA_a/b_dom"/>
</dbReference>
<dbReference type="InterPro" id="IPR020095">
    <property type="entry name" value="PsdUridine_synth_TruA_C"/>
</dbReference>
<dbReference type="InterPro" id="IPR020094">
    <property type="entry name" value="TruA/RsuA/RluB/E/F_N"/>
</dbReference>
<dbReference type="NCBIfam" id="TIGR00071">
    <property type="entry name" value="hisT_truA"/>
    <property type="match status" value="1"/>
</dbReference>
<dbReference type="PANTHER" id="PTHR11142">
    <property type="entry name" value="PSEUDOURIDYLATE SYNTHASE"/>
    <property type="match status" value="1"/>
</dbReference>
<dbReference type="PANTHER" id="PTHR11142:SF0">
    <property type="entry name" value="TRNA PSEUDOURIDINE SYNTHASE-LIKE 1"/>
    <property type="match status" value="1"/>
</dbReference>
<dbReference type="Pfam" id="PF01416">
    <property type="entry name" value="PseudoU_synth_1"/>
    <property type="match status" value="2"/>
</dbReference>
<dbReference type="PIRSF" id="PIRSF001430">
    <property type="entry name" value="tRNA_psdUrid_synth"/>
    <property type="match status" value="1"/>
</dbReference>
<dbReference type="SUPFAM" id="SSF55120">
    <property type="entry name" value="Pseudouridine synthase"/>
    <property type="match status" value="1"/>
</dbReference>
<proteinExistence type="inferred from homology"/>
<gene>
    <name evidence="1" type="primary">truA</name>
    <name type="ordered locus">Rsph17029_2224</name>
</gene>
<name>TRUA_CERS1</name>